<organism>
    <name type="scientific">Dictyostelium discoideum</name>
    <name type="common">Social amoeba</name>
    <dbReference type="NCBI Taxonomy" id="44689"/>
    <lineage>
        <taxon>Eukaryota</taxon>
        <taxon>Amoebozoa</taxon>
        <taxon>Evosea</taxon>
        <taxon>Eumycetozoa</taxon>
        <taxon>Dictyostelia</taxon>
        <taxon>Dictyosteliales</taxon>
        <taxon>Dictyosteliaceae</taxon>
        <taxon>Dictyostelium</taxon>
    </lineage>
</organism>
<dbReference type="EMBL" id="AAFI02000130">
    <property type="protein sequence ID" value="EAL62864.1"/>
    <property type="molecule type" value="Genomic_DNA"/>
</dbReference>
<dbReference type="RefSeq" id="XP_636366.1">
    <property type="nucleotide sequence ID" value="XM_631274.1"/>
</dbReference>
<dbReference type="GlyGen" id="Q54HW8">
    <property type="glycosylation" value="5 sites"/>
</dbReference>
<dbReference type="PaxDb" id="44689-DDB0232012"/>
<dbReference type="EnsemblProtists" id="EAL62864">
    <property type="protein sequence ID" value="EAL62864"/>
    <property type="gene ID" value="DDB_G0289171"/>
</dbReference>
<dbReference type="GeneID" id="8626994"/>
<dbReference type="KEGG" id="ddi:DDB_G0289171"/>
<dbReference type="dictyBase" id="DDB_G0289171"/>
<dbReference type="VEuPathDB" id="AmoebaDB:DDB_G0289171"/>
<dbReference type="HOGENOM" id="CLU_777127_0_0_1"/>
<dbReference type="InParanoid" id="Q54HW8"/>
<dbReference type="PhylomeDB" id="Q54HW8"/>
<dbReference type="PRO" id="PR:Q54HW8"/>
<dbReference type="Proteomes" id="UP000002195">
    <property type="component" value="Chromosome 5"/>
</dbReference>
<dbReference type="GO" id="GO:0005576">
    <property type="term" value="C:extracellular region"/>
    <property type="evidence" value="ECO:0007669"/>
    <property type="project" value="UniProtKB-SubCell"/>
</dbReference>
<feature type="signal peptide" evidence="1">
    <location>
        <begin position="1"/>
        <end position="22"/>
    </location>
</feature>
<feature type="chain" id="PRO_0000393123" description="Uncharacterized protein DDB_G0289171">
    <location>
        <begin position="23"/>
        <end position="352"/>
    </location>
</feature>
<feature type="region of interest" description="Disordered" evidence="2">
    <location>
        <begin position="25"/>
        <end position="49"/>
    </location>
</feature>
<feature type="compositionally biased region" description="Low complexity" evidence="2">
    <location>
        <begin position="25"/>
        <end position="47"/>
    </location>
</feature>
<feature type="glycosylation site" description="N-linked (GlcNAc...) asparagine" evidence="1">
    <location>
        <position position="76"/>
    </location>
</feature>
<feature type="glycosylation site" description="N-linked (GlcNAc...) asparagine" evidence="1">
    <location>
        <position position="110"/>
    </location>
</feature>
<feature type="glycosylation site" description="N-linked (GlcNAc...) asparagine" evidence="1">
    <location>
        <position position="182"/>
    </location>
</feature>
<feature type="glycosylation site" description="N-linked (GlcNAc...) asparagine" evidence="1">
    <location>
        <position position="212"/>
    </location>
</feature>
<feature type="glycosylation site" description="N-linked (GlcNAc...) asparagine" evidence="1">
    <location>
        <position position="223"/>
    </location>
</feature>
<comment type="subcellular location">
    <subcellularLocation>
        <location evidence="4">Secreted</location>
    </subcellularLocation>
</comment>
<comment type="developmental stage">
    <text evidence="3">Expressed in gametes.</text>
</comment>
<gene>
    <name type="ORF">DDB_G0289171</name>
</gene>
<accession>Q54HW8</accession>
<sequence>MIFKKTILIFIISFFFISISFASSSSSSSSSSSSSSSSWSSSESSSSPAPSKYIYAIAVIENYKQQQFLIIDPWENNTILSESLQLNFEIDDILIVEESNTFIVYSESTNQSLISINPNTLQSKLINKITPPIAGFEDMLQPSVFISEKKVLYKPVVDINGGGELSSLLRLDFESGKGTFVNISNENQISTAGSIPNVAYDQLNDYVFACYNSSNNNVLVAFNETTSDIIETYGILKNIQGFDVTMMFTDKLGNLFLVYQDNSGDVFVCEVDSILMECFGVFKYNIGTVPYAFSPYFLSRDKSSLVFITYIDENQFLLEVVDFNHGFKSKKTIFSNSYLNNPFNVYWVSLTY</sequence>
<keyword id="KW-0325">Glycoprotein</keyword>
<keyword id="KW-1185">Reference proteome</keyword>
<keyword id="KW-0964">Secreted</keyword>
<keyword id="KW-0732">Signal</keyword>
<reference key="1">
    <citation type="journal article" date="2005" name="Nature">
        <title>The genome of the social amoeba Dictyostelium discoideum.</title>
        <authorList>
            <person name="Eichinger L."/>
            <person name="Pachebat J.A."/>
            <person name="Gloeckner G."/>
            <person name="Rajandream M.A."/>
            <person name="Sucgang R."/>
            <person name="Berriman M."/>
            <person name="Song J."/>
            <person name="Olsen R."/>
            <person name="Szafranski K."/>
            <person name="Xu Q."/>
            <person name="Tunggal B."/>
            <person name="Kummerfeld S."/>
            <person name="Madera M."/>
            <person name="Konfortov B.A."/>
            <person name="Rivero F."/>
            <person name="Bankier A.T."/>
            <person name="Lehmann R."/>
            <person name="Hamlin N."/>
            <person name="Davies R."/>
            <person name="Gaudet P."/>
            <person name="Fey P."/>
            <person name="Pilcher K."/>
            <person name="Chen G."/>
            <person name="Saunders D."/>
            <person name="Sodergren E.J."/>
            <person name="Davis P."/>
            <person name="Kerhornou A."/>
            <person name="Nie X."/>
            <person name="Hall N."/>
            <person name="Anjard C."/>
            <person name="Hemphill L."/>
            <person name="Bason N."/>
            <person name="Farbrother P."/>
            <person name="Desany B."/>
            <person name="Just E."/>
            <person name="Morio T."/>
            <person name="Rost R."/>
            <person name="Churcher C.M."/>
            <person name="Cooper J."/>
            <person name="Haydock S."/>
            <person name="van Driessche N."/>
            <person name="Cronin A."/>
            <person name="Goodhead I."/>
            <person name="Muzny D.M."/>
            <person name="Mourier T."/>
            <person name="Pain A."/>
            <person name="Lu M."/>
            <person name="Harper D."/>
            <person name="Lindsay R."/>
            <person name="Hauser H."/>
            <person name="James K.D."/>
            <person name="Quiles M."/>
            <person name="Madan Babu M."/>
            <person name="Saito T."/>
            <person name="Buchrieser C."/>
            <person name="Wardroper A."/>
            <person name="Felder M."/>
            <person name="Thangavelu M."/>
            <person name="Johnson D."/>
            <person name="Knights A."/>
            <person name="Loulseged H."/>
            <person name="Mungall K.L."/>
            <person name="Oliver K."/>
            <person name="Price C."/>
            <person name="Quail M.A."/>
            <person name="Urushihara H."/>
            <person name="Hernandez J."/>
            <person name="Rabbinowitsch E."/>
            <person name="Steffen D."/>
            <person name="Sanders M."/>
            <person name="Ma J."/>
            <person name="Kohara Y."/>
            <person name="Sharp S."/>
            <person name="Simmonds M.N."/>
            <person name="Spiegler S."/>
            <person name="Tivey A."/>
            <person name="Sugano S."/>
            <person name="White B."/>
            <person name="Walker D."/>
            <person name="Woodward J.R."/>
            <person name="Winckler T."/>
            <person name="Tanaka Y."/>
            <person name="Shaulsky G."/>
            <person name="Schleicher M."/>
            <person name="Weinstock G.M."/>
            <person name="Rosenthal A."/>
            <person name="Cox E.C."/>
            <person name="Chisholm R.L."/>
            <person name="Gibbs R.A."/>
            <person name="Loomis W.F."/>
            <person name="Platzer M."/>
            <person name="Kay R.R."/>
            <person name="Williams J.G."/>
            <person name="Dear P.H."/>
            <person name="Noegel A.A."/>
            <person name="Barrell B.G."/>
            <person name="Kuspa A."/>
        </authorList>
    </citation>
    <scope>NUCLEOTIDE SEQUENCE [LARGE SCALE GENOMIC DNA]</scope>
    <source>
        <strain>AX4</strain>
    </source>
</reference>
<reference key="2">
    <citation type="journal article" date="2003" name="Mech. Dev.">
        <title>Construction of a gamete-enriched gene pool and RNAi-mediated functional analysis in Dictyostelium discoideum.</title>
        <authorList>
            <person name="Muramoto T."/>
            <person name="Suzuki K."/>
            <person name="Shimizu H."/>
            <person name="Kohara Y."/>
            <person name="Kohriki E."/>
            <person name="Obara S."/>
            <person name="Tanaka Y."/>
            <person name="Urushihara H."/>
        </authorList>
    </citation>
    <scope>DEVELOPMENTAL STAGE [LARGE SCALE ANALYSIS]</scope>
</reference>
<name>Y9171_DICDI</name>
<evidence type="ECO:0000255" key="1"/>
<evidence type="ECO:0000256" key="2">
    <source>
        <dbReference type="SAM" id="MobiDB-lite"/>
    </source>
</evidence>
<evidence type="ECO:0000269" key="3">
    <source>
    </source>
</evidence>
<evidence type="ECO:0000305" key="4"/>
<protein>
    <recommendedName>
        <fullName>Uncharacterized protein DDB_G0289171</fullName>
    </recommendedName>
</protein>
<proteinExistence type="evidence at transcript level"/>